<reference key="1">
    <citation type="journal article" date="2005" name="BMC Genomics">
        <title>Characterization of 954 bovine full-CDS cDNA sequences.</title>
        <authorList>
            <person name="Harhay G.P."/>
            <person name="Sonstegard T.S."/>
            <person name="Keele J.W."/>
            <person name="Heaton M.P."/>
            <person name="Clawson M.L."/>
            <person name="Snelling W.M."/>
            <person name="Wiedmann R.T."/>
            <person name="Van Tassell C.P."/>
            <person name="Smith T.P.L."/>
        </authorList>
    </citation>
    <scope>NUCLEOTIDE SEQUENCE [LARGE SCALE MRNA]</scope>
</reference>
<reference key="2">
    <citation type="submission" date="2005-11" db="EMBL/GenBank/DDBJ databases">
        <authorList>
            <consortium name="NIH - Mammalian Gene Collection (MGC) project"/>
        </authorList>
    </citation>
    <scope>NUCLEOTIDE SEQUENCE [LARGE SCALE MRNA]</scope>
    <source>
        <strain>Crossbred X Angus</strain>
        <tissue>Liver</tissue>
    </source>
</reference>
<protein>
    <recommendedName>
        <fullName>Cathepsin K</fullName>
        <ecNumber>3.4.22.38</ecNumber>
    </recommendedName>
</protein>
<dbReference type="EC" id="3.4.22.38"/>
<dbReference type="EMBL" id="BT021052">
    <property type="protein sequence ID" value="AAX09069.1"/>
    <property type="status" value="ALT_INIT"/>
    <property type="molecule type" value="mRNA"/>
</dbReference>
<dbReference type="EMBL" id="BC109853">
    <property type="protein sequence ID" value="AAI09854.1"/>
    <property type="status" value="ALT_INIT"/>
    <property type="molecule type" value="mRNA"/>
</dbReference>
<dbReference type="RefSeq" id="NP_001029607.1">
    <property type="nucleotide sequence ID" value="NM_001034435.1"/>
</dbReference>
<dbReference type="SMR" id="Q5E968"/>
<dbReference type="FunCoup" id="Q5E968">
    <property type="interactions" value="318"/>
</dbReference>
<dbReference type="STRING" id="9913.ENSBTAP00000028016"/>
<dbReference type="MEROPS" id="C01.036"/>
<dbReference type="MEROPS" id="I29.007"/>
<dbReference type="GlyCosmos" id="Q5E968">
    <property type="glycosylation" value="1 site, No reported glycans"/>
</dbReference>
<dbReference type="GlyGen" id="Q5E968">
    <property type="glycosylation" value="1 site"/>
</dbReference>
<dbReference type="PaxDb" id="9913-ENSBTAP00000028016"/>
<dbReference type="GeneID" id="513038"/>
<dbReference type="KEGG" id="bta:513038"/>
<dbReference type="CTD" id="1513"/>
<dbReference type="VEuPathDB" id="HostDB:ENSBTAG00000021035"/>
<dbReference type="eggNOG" id="KOG1543">
    <property type="taxonomic scope" value="Eukaryota"/>
</dbReference>
<dbReference type="HOGENOM" id="CLU_012184_1_2_1"/>
<dbReference type="InParanoid" id="Q5E968"/>
<dbReference type="OMA" id="EGETCCC"/>
<dbReference type="OrthoDB" id="65740at2759"/>
<dbReference type="TreeFam" id="TF313739"/>
<dbReference type="Reactome" id="R-BTA-1442490">
    <property type="pathway name" value="Collagen degradation"/>
</dbReference>
<dbReference type="Reactome" id="R-BTA-1474228">
    <property type="pathway name" value="Degradation of the extracellular matrix"/>
</dbReference>
<dbReference type="Reactome" id="R-BTA-1592389">
    <property type="pathway name" value="Activation of Matrix Metalloproteinases"/>
</dbReference>
<dbReference type="Reactome" id="R-BTA-1679131">
    <property type="pathway name" value="Trafficking and processing of endosomal TLR"/>
</dbReference>
<dbReference type="Reactome" id="R-BTA-2132295">
    <property type="pathway name" value="MHC class II antigen presentation"/>
</dbReference>
<dbReference type="Reactome" id="R-BTA-8939242">
    <property type="pathway name" value="RUNX1 regulates transcription of genes involved in differentiation of keratinocytes"/>
</dbReference>
<dbReference type="Proteomes" id="UP000009136">
    <property type="component" value="Chromosome 3"/>
</dbReference>
<dbReference type="Bgee" id="ENSBTAG00000021035">
    <property type="expression patterns" value="Expressed in uterine cervix and 104 other cell types or tissues"/>
</dbReference>
<dbReference type="GO" id="GO:0016324">
    <property type="term" value="C:apical plasma membrane"/>
    <property type="evidence" value="ECO:0007669"/>
    <property type="project" value="UniProtKB-SubCell"/>
</dbReference>
<dbReference type="GO" id="GO:0005615">
    <property type="term" value="C:extracellular space"/>
    <property type="evidence" value="ECO:0000250"/>
    <property type="project" value="UniProtKB"/>
</dbReference>
<dbReference type="GO" id="GO:0005764">
    <property type="term" value="C:lysosome"/>
    <property type="evidence" value="ECO:0000250"/>
    <property type="project" value="UniProtKB"/>
</dbReference>
<dbReference type="GO" id="GO:0004197">
    <property type="term" value="F:cysteine-type endopeptidase activity"/>
    <property type="evidence" value="ECO:0000318"/>
    <property type="project" value="GO_Central"/>
</dbReference>
<dbReference type="GO" id="GO:0051603">
    <property type="term" value="P:proteolysis involved in protein catabolic process"/>
    <property type="evidence" value="ECO:0000318"/>
    <property type="project" value="GO_Central"/>
</dbReference>
<dbReference type="GO" id="GO:0006590">
    <property type="term" value="P:thyroid hormone generation"/>
    <property type="evidence" value="ECO:0000250"/>
    <property type="project" value="UniProtKB"/>
</dbReference>
<dbReference type="CDD" id="cd02248">
    <property type="entry name" value="Peptidase_C1A"/>
    <property type="match status" value="1"/>
</dbReference>
<dbReference type="FunFam" id="3.90.70.10:FF:000006">
    <property type="entry name" value="Cathepsin S"/>
    <property type="match status" value="1"/>
</dbReference>
<dbReference type="Gene3D" id="3.90.70.10">
    <property type="entry name" value="Cysteine proteinases"/>
    <property type="match status" value="1"/>
</dbReference>
<dbReference type="InterPro" id="IPR038765">
    <property type="entry name" value="Papain-like_cys_pep_sf"/>
</dbReference>
<dbReference type="InterPro" id="IPR025661">
    <property type="entry name" value="Pept_asp_AS"/>
</dbReference>
<dbReference type="InterPro" id="IPR000169">
    <property type="entry name" value="Pept_cys_AS"/>
</dbReference>
<dbReference type="InterPro" id="IPR025660">
    <property type="entry name" value="Pept_his_AS"/>
</dbReference>
<dbReference type="InterPro" id="IPR013128">
    <property type="entry name" value="Peptidase_C1A"/>
</dbReference>
<dbReference type="InterPro" id="IPR000668">
    <property type="entry name" value="Peptidase_C1A_C"/>
</dbReference>
<dbReference type="InterPro" id="IPR039417">
    <property type="entry name" value="Peptidase_C1A_papain-like"/>
</dbReference>
<dbReference type="InterPro" id="IPR013201">
    <property type="entry name" value="Prot_inhib_I29"/>
</dbReference>
<dbReference type="PANTHER" id="PTHR12411">
    <property type="entry name" value="CYSTEINE PROTEASE FAMILY C1-RELATED"/>
    <property type="match status" value="1"/>
</dbReference>
<dbReference type="Pfam" id="PF08246">
    <property type="entry name" value="Inhibitor_I29"/>
    <property type="match status" value="1"/>
</dbReference>
<dbReference type="Pfam" id="PF00112">
    <property type="entry name" value="Peptidase_C1"/>
    <property type="match status" value="1"/>
</dbReference>
<dbReference type="PRINTS" id="PR00705">
    <property type="entry name" value="PAPAIN"/>
</dbReference>
<dbReference type="SMART" id="SM00848">
    <property type="entry name" value="Inhibitor_I29"/>
    <property type="match status" value="1"/>
</dbReference>
<dbReference type="SMART" id="SM00645">
    <property type="entry name" value="Pept_C1"/>
    <property type="match status" value="1"/>
</dbReference>
<dbReference type="SUPFAM" id="SSF54001">
    <property type="entry name" value="Cysteine proteinases"/>
    <property type="match status" value="1"/>
</dbReference>
<dbReference type="PROSITE" id="PS00640">
    <property type="entry name" value="THIOL_PROTEASE_ASN"/>
    <property type="match status" value="1"/>
</dbReference>
<dbReference type="PROSITE" id="PS00139">
    <property type="entry name" value="THIOL_PROTEASE_CYS"/>
    <property type="match status" value="1"/>
</dbReference>
<dbReference type="PROSITE" id="PS00639">
    <property type="entry name" value="THIOL_PROTEASE_HIS"/>
    <property type="match status" value="1"/>
</dbReference>
<name>CATK_BOVIN</name>
<accession>Q5E968</accession>
<comment type="function">
    <text evidence="2">Thiol protease involved in osteoclastic bone resorption and may participate partially in the disorder of bone remodeling. Displays potent endoprotease activity against fibrinogen at acid pH. May play an important role in extracellular matrix degradation. Involved in the release of thyroid hormone thyroxine (T4) by limited proteolysis of TG/thyroglobulin in the thyroid follicle lumen.</text>
</comment>
<comment type="catalytic activity">
    <reaction>
        <text>Broad proteolytic activity. With small-molecule substrates and inhibitors, the major determinant of specificity is P2, which is preferably Leu, Met &gt; Phe, and not Arg.</text>
        <dbReference type="EC" id="3.4.22.38"/>
    </reaction>
</comment>
<comment type="subcellular location">
    <subcellularLocation>
        <location evidence="2">Lysosome</location>
    </subcellularLocation>
    <subcellularLocation>
        <location evidence="2">Secreted</location>
    </subcellularLocation>
    <subcellularLocation>
        <location evidence="2">Apical cell membrane</location>
        <topology evidence="2">Peripheral membrane protein</topology>
        <orientation evidence="2">Extracellular side</orientation>
    </subcellularLocation>
    <text evidence="2">Localizes to the lumen of thyroid follicles and to the apical membrane of thyroid epithelial cells.</text>
</comment>
<comment type="similarity">
    <text evidence="4 5 6">Belongs to the peptidase C1 family.</text>
</comment>
<comment type="sequence caution" evidence="7">
    <conflict type="erroneous initiation">
        <sequence resource="EMBL-CDS" id="AAI09854"/>
    </conflict>
</comment>
<comment type="sequence caution" evidence="7">
    <conflict type="erroneous initiation">
        <sequence resource="EMBL-CDS" id="AAX09069"/>
    </conflict>
</comment>
<keyword id="KW-1003">Cell membrane</keyword>
<keyword id="KW-1015">Disulfide bond</keyword>
<keyword id="KW-0325">Glycoprotein</keyword>
<keyword id="KW-0378">Hydrolase</keyword>
<keyword id="KW-0458">Lysosome</keyword>
<keyword id="KW-0472">Membrane</keyword>
<keyword id="KW-0645">Protease</keyword>
<keyword id="KW-1185">Reference proteome</keyword>
<keyword id="KW-0964">Secreted</keyword>
<keyword id="KW-0732">Signal</keyword>
<keyword id="KW-0788">Thiol protease</keyword>
<keyword id="KW-0865">Zymogen</keyword>
<gene>
    <name type="primary">CTSK</name>
</gene>
<organism>
    <name type="scientific">Bos taurus</name>
    <name type="common">Bovine</name>
    <dbReference type="NCBI Taxonomy" id="9913"/>
    <lineage>
        <taxon>Eukaryota</taxon>
        <taxon>Metazoa</taxon>
        <taxon>Chordata</taxon>
        <taxon>Craniata</taxon>
        <taxon>Vertebrata</taxon>
        <taxon>Euteleostomi</taxon>
        <taxon>Mammalia</taxon>
        <taxon>Eutheria</taxon>
        <taxon>Laurasiatheria</taxon>
        <taxon>Artiodactyla</taxon>
        <taxon>Ruminantia</taxon>
        <taxon>Pecora</taxon>
        <taxon>Bovidae</taxon>
        <taxon>Bovinae</taxon>
        <taxon>Bos</taxon>
    </lineage>
</organism>
<feature type="signal peptide" evidence="3">
    <location>
        <begin position="1"/>
        <end position="15"/>
    </location>
</feature>
<feature type="propeptide" id="PRO_0000236236" description="Activation peptide">
    <location>
        <begin position="16"/>
        <end position="114"/>
    </location>
</feature>
<feature type="chain" id="PRO_0000236237" description="Cathepsin K">
    <location>
        <begin position="115"/>
        <end position="329"/>
    </location>
</feature>
<feature type="active site" evidence="1">
    <location>
        <position position="139"/>
    </location>
</feature>
<feature type="active site" evidence="1">
    <location>
        <position position="276"/>
    </location>
</feature>
<feature type="active site" evidence="1">
    <location>
        <position position="296"/>
    </location>
</feature>
<feature type="glycosylation site" description="N-linked (GlcNAc...) asparagine" evidence="3">
    <location>
        <position position="103"/>
    </location>
</feature>
<feature type="disulfide bond" evidence="1">
    <location>
        <begin position="136"/>
        <end position="177"/>
    </location>
</feature>
<feature type="disulfide bond" evidence="1">
    <location>
        <begin position="170"/>
        <end position="210"/>
    </location>
</feature>
<feature type="disulfide bond" evidence="1">
    <location>
        <begin position="269"/>
        <end position="318"/>
    </location>
</feature>
<proteinExistence type="evidence at transcript level"/>
<sequence length="329" mass="36947">MWGLTVLLLPVVSFALYPEEILDTQWELWKKTYRKQYNSKGDEISRRLIWEKNLKHISIHNLEASLGVHTYELAMNHLGDMTSEEVVQKMTGLKVPASRSRSNDTLYIPDWEGRAPDSVDYRKKGYVTPVKNQGQCGSCWAFSSVGALEGQLKKKTGKLLNLSPQNLVDCVSENDGCGGGYMTNAFQYVQKNRGIDSEDAYPYVGQDENCMYNPTGKAAKCRGYREIPEGNEKALKRAVARVGPISVAIDASLTSFQFYRKGVYYDENCNSDNLNHAVLAVGYGIQKGNKHWIIKNSWGENWGNKGYILMARNKNNACGIANLASFPKM</sequence>
<evidence type="ECO:0000250" key="1"/>
<evidence type="ECO:0000250" key="2">
    <source>
        <dbReference type="UniProtKB" id="P43235"/>
    </source>
</evidence>
<evidence type="ECO:0000255" key="3"/>
<evidence type="ECO:0000255" key="4">
    <source>
        <dbReference type="PROSITE-ProRule" id="PRU10088"/>
    </source>
</evidence>
<evidence type="ECO:0000255" key="5">
    <source>
        <dbReference type="PROSITE-ProRule" id="PRU10089"/>
    </source>
</evidence>
<evidence type="ECO:0000255" key="6">
    <source>
        <dbReference type="PROSITE-ProRule" id="PRU10090"/>
    </source>
</evidence>
<evidence type="ECO:0000305" key="7"/>